<comment type="function">
    <text evidence="1">One of the primary rRNA binding proteins, it binds directly to 16S rRNA where it nucleates assembly of the body of the 30S subunit.</text>
</comment>
<comment type="function">
    <text evidence="1">With S5 and S12 plays an important role in translational accuracy.</text>
</comment>
<comment type="subunit">
    <text evidence="1">Part of the 30S ribosomal subunit. Contacts protein S5. The interaction surface between S4 and S5 is involved in control of translational fidelity.</text>
</comment>
<comment type="similarity">
    <text evidence="1">Belongs to the universal ribosomal protein uS4 family.</text>
</comment>
<accession>Q03EN4</accession>
<gene>
    <name evidence="1" type="primary">rpsD</name>
    <name type="ordered locus">PEPE_1297</name>
</gene>
<evidence type="ECO:0000255" key="1">
    <source>
        <dbReference type="HAMAP-Rule" id="MF_01306"/>
    </source>
</evidence>
<evidence type="ECO:0000305" key="2"/>
<organism>
    <name type="scientific">Pediococcus pentosaceus (strain ATCC 25745 / CCUG 21536 / LMG 10740 / 183-1w)</name>
    <dbReference type="NCBI Taxonomy" id="278197"/>
    <lineage>
        <taxon>Bacteria</taxon>
        <taxon>Bacillati</taxon>
        <taxon>Bacillota</taxon>
        <taxon>Bacilli</taxon>
        <taxon>Lactobacillales</taxon>
        <taxon>Lactobacillaceae</taxon>
        <taxon>Pediococcus</taxon>
    </lineage>
</organism>
<reference key="1">
    <citation type="journal article" date="2006" name="Proc. Natl. Acad. Sci. U.S.A.">
        <title>Comparative genomics of the lactic acid bacteria.</title>
        <authorList>
            <person name="Makarova K.S."/>
            <person name="Slesarev A."/>
            <person name="Wolf Y.I."/>
            <person name="Sorokin A."/>
            <person name="Mirkin B."/>
            <person name="Koonin E.V."/>
            <person name="Pavlov A."/>
            <person name="Pavlova N."/>
            <person name="Karamychev V."/>
            <person name="Polouchine N."/>
            <person name="Shakhova V."/>
            <person name="Grigoriev I."/>
            <person name="Lou Y."/>
            <person name="Rohksar D."/>
            <person name="Lucas S."/>
            <person name="Huang K."/>
            <person name="Goodstein D.M."/>
            <person name="Hawkins T."/>
            <person name="Plengvidhya V."/>
            <person name="Welker D."/>
            <person name="Hughes J."/>
            <person name="Goh Y."/>
            <person name="Benson A."/>
            <person name="Baldwin K."/>
            <person name="Lee J.-H."/>
            <person name="Diaz-Muniz I."/>
            <person name="Dosti B."/>
            <person name="Smeianov V."/>
            <person name="Wechter W."/>
            <person name="Barabote R."/>
            <person name="Lorca G."/>
            <person name="Altermann E."/>
            <person name="Barrangou R."/>
            <person name="Ganesan B."/>
            <person name="Xie Y."/>
            <person name="Rawsthorne H."/>
            <person name="Tamir D."/>
            <person name="Parker C."/>
            <person name="Breidt F."/>
            <person name="Broadbent J.R."/>
            <person name="Hutkins R."/>
            <person name="O'Sullivan D."/>
            <person name="Steele J."/>
            <person name="Unlu G."/>
            <person name="Saier M.H. Jr."/>
            <person name="Klaenhammer T."/>
            <person name="Richardson P."/>
            <person name="Kozyavkin S."/>
            <person name="Weimer B.C."/>
            <person name="Mills D.A."/>
        </authorList>
    </citation>
    <scope>NUCLEOTIDE SEQUENCE [LARGE SCALE GENOMIC DNA]</scope>
    <source>
        <strain>ATCC 25745 / CCUG 21536 / LMG 10740 / 183-1w</strain>
    </source>
</reference>
<protein>
    <recommendedName>
        <fullName evidence="1">Small ribosomal subunit protein uS4</fullName>
    </recommendedName>
    <alternativeName>
        <fullName evidence="2">30S ribosomal protein S4</fullName>
    </alternativeName>
</protein>
<sequence length="202" mass="23178">MSRYTGPSWKVSRRLGISLTGTGKELARRPYAPGDHGQNNRRKISEYGMQLREKQKLRMMYGLTERQFSNLFVRAGKIREGLPGTNFMVLLERRLDNMVYRLGLATTRRQARQLVNHGHITVDGKRVDIPSYEVEIGQVIGVREKSKDLKIISEAVEAVVGRPQFVQFDADKLEGSLVRLPQRDELEADIDDSLIVEYYNKL</sequence>
<keyword id="KW-0687">Ribonucleoprotein</keyword>
<keyword id="KW-0689">Ribosomal protein</keyword>
<keyword id="KW-0694">RNA-binding</keyword>
<keyword id="KW-0699">rRNA-binding</keyword>
<proteinExistence type="inferred from homology"/>
<name>RS4_PEDPA</name>
<feature type="chain" id="PRO_0000293331" description="Small ribosomal subunit protein uS4">
    <location>
        <begin position="1"/>
        <end position="202"/>
    </location>
</feature>
<feature type="domain" description="S4 RNA-binding" evidence="1">
    <location>
        <begin position="93"/>
        <end position="156"/>
    </location>
</feature>
<dbReference type="EMBL" id="CP000422">
    <property type="protein sequence ID" value="ABJ68338.1"/>
    <property type="molecule type" value="Genomic_DNA"/>
</dbReference>
<dbReference type="RefSeq" id="WP_011673597.1">
    <property type="nucleotide sequence ID" value="NC_008525.1"/>
</dbReference>
<dbReference type="SMR" id="Q03EN4"/>
<dbReference type="STRING" id="278197.PEPE_1297"/>
<dbReference type="GeneID" id="33061597"/>
<dbReference type="KEGG" id="ppe:PEPE_1297"/>
<dbReference type="eggNOG" id="COG0522">
    <property type="taxonomic scope" value="Bacteria"/>
</dbReference>
<dbReference type="HOGENOM" id="CLU_092403_0_1_9"/>
<dbReference type="OrthoDB" id="9803672at2"/>
<dbReference type="Proteomes" id="UP000000773">
    <property type="component" value="Chromosome"/>
</dbReference>
<dbReference type="GO" id="GO:0015935">
    <property type="term" value="C:small ribosomal subunit"/>
    <property type="evidence" value="ECO:0007669"/>
    <property type="project" value="InterPro"/>
</dbReference>
<dbReference type="GO" id="GO:0019843">
    <property type="term" value="F:rRNA binding"/>
    <property type="evidence" value="ECO:0007669"/>
    <property type="project" value="UniProtKB-UniRule"/>
</dbReference>
<dbReference type="GO" id="GO:0003735">
    <property type="term" value="F:structural constituent of ribosome"/>
    <property type="evidence" value="ECO:0007669"/>
    <property type="project" value="InterPro"/>
</dbReference>
<dbReference type="GO" id="GO:0042274">
    <property type="term" value="P:ribosomal small subunit biogenesis"/>
    <property type="evidence" value="ECO:0007669"/>
    <property type="project" value="TreeGrafter"/>
</dbReference>
<dbReference type="GO" id="GO:0006412">
    <property type="term" value="P:translation"/>
    <property type="evidence" value="ECO:0007669"/>
    <property type="project" value="UniProtKB-UniRule"/>
</dbReference>
<dbReference type="CDD" id="cd00165">
    <property type="entry name" value="S4"/>
    <property type="match status" value="1"/>
</dbReference>
<dbReference type="FunFam" id="3.10.290.10:FF:000001">
    <property type="entry name" value="30S ribosomal protein S4"/>
    <property type="match status" value="1"/>
</dbReference>
<dbReference type="Gene3D" id="1.10.1050.10">
    <property type="entry name" value="Ribosomal Protein S4 Delta 41, Chain A, domain 1"/>
    <property type="match status" value="1"/>
</dbReference>
<dbReference type="Gene3D" id="3.10.290.10">
    <property type="entry name" value="RNA-binding S4 domain"/>
    <property type="match status" value="1"/>
</dbReference>
<dbReference type="HAMAP" id="MF_01306_B">
    <property type="entry name" value="Ribosomal_uS4_B"/>
    <property type="match status" value="1"/>
</dbReference>
<dbReference type="InterPro" id="IPR022801">
    <property type="entry name" value="Ribosomal_uS4"/>
</dbReference>
<dbReference type="InterPro" id="IPR005709">
    <property type="entry name" value="Ribosomal_uS4_bac-type"/>
</dbReference>
<dbReference type="InterPro" id="IPR018079">
    <property type="entry name" value="Ribosomal_uS4_CS"/>
</dbReference>
<dbReference type="InterPro" id="IPR001912">
    <property type="entry name" value="Ribosomal_uS4_N"/>
</dbReference>
<dbReference type="InterPro" id="IPR002942">
    <property type="entry name" value="S4_RNA-bd"/>
</dbReference>
<dbReference type="InterPro" id="IPR036986">
    <property type="entry name" value="S4_RNA-bd_sf"/>
</dbReference>
<dbReference type="NCBIfam" id="NF003717">
    <property type="entry name" value="PRK05327.1"/>
    <property type="match status" value="1"/>
</dbReference>
<dbReference type="NCBIfam" id="TIGR01017">
    <property type="entry name" value="rpsD_bact"/>
    <property type="match status" value="1"/>
</dbReference>
<dbReference type="PANTHER" id="PTHR11831">
    <property type="entry name" value="30S 40S RIBOSOMAL PROTEIN"/>
    <property type="match status" value="1"/>
</dbReference>
<dbReference type="PANTHER" id="PTHR11831:SF4">
    <property type="entry name" value="SMALL RIBOSOMAL SUBUNIT PROTEIN US4M"/>
    <property type="match status" value="1"/>
</dbReference>
<dbReference type="Pfam" id="PF00163">
    <property type="entry name" value="Ribosomal_S4"/>
    <property type="match status" value="1"/>
</dbReference>
<dbReference type="Pfam" id="PF01479">
    <property type="entry name" value="S4"/>
    <property type="match status" value="1"/>
</dbReference>
<dbReference type="SMART" id="SM01390">
    <property type="entry name" value="Ribosomal_S4"/>
    <property type="match status" value="1"/>
</dbReference>
<dbReference type="SMART" id="SM00363">
    <property type="entry name" value="S4"/>
    <property type="match status" value="1"/>
</dbReference>
<dbReference type="SUPFAM" id="SSF55174">
    <property type="entry name" value="Alpha-L RNA-binding motif"/>
    <property type="match status" value="1"/>
</dbReference>
<dbReference type="PROSITE" id="PS00632">
    <property type="entry name" value="RIBOSOMAL_S4"/>
    <property type="match status" value="1"/>
</dbReference>
<dbReference type="PROSITE" id="PS50889">
    <property type="entry name" value="S4"/>
    <property type="match status" value="1"/>
</dbReference>